<accession>A8AII9</accession>
<comment type="function">
    <text evidence="1">Catalyzes the attachment of serine to tRNA(Ser). Is also able to aminoacylate tRNA(Sec) with serine, to form the misacylated tRNA L-seryl-tRNA(Sec), which will be further converted into selenocysteinyl-tRNA(Sec).</text>
</comment>
<comment type="catalytic activity">
    <reaction evidence="1">
        <text>tRNA(Ser) + L-serine + ATP = L-seryl-tRNA(Ser) + AMP + diphosphate + H(+)</text>
        <dbReference type="Rhea" id="RHEA:12292"/>
        <dbReference type="Rhea" id="RHEA-COMP:9669"/>
        <dbReference type="Rhea" id="RHEA-COMP:9703"/>
        <dbReference type="ChEBI" id="CHEBI:15378"/>
        <dbReference type="ChEBI" id="CHEBI:30616"/>
        <dbReference type="ChEBI" id="CHEBI:33019"/>
        <dbReference type="ChEBI" id="CHEBI:33384"/>
        <dbReference type="ChEBI" id="CHEBI:78442"/>
        <dbReference type="ChEBI" id="CHEBI:78533"/>
        <dbReference type="ChEBI" id="CHEBI:456215"/>
        <dbReference type="EC" id="6.1.1.11"/>
    </reaction>
</comment>
<comment type="catalytic activity">
    <reaction evidence="1">
        <text>tRNA(Sec) + L-serine + ATP = L-seryl-tRNA(Sec) + AMP + diphosphate + H(+)</text>
        <dbReference type="Rhea" id="RHEA:42580"/>
        <dbReference type="Rhea" id="RHEA-COMP:9742"/>
        <dbReference type="Rhea" id="RHEA-COMP:10128"/>
        <dbReference type="ChEBI" id="CHEBI:15378"/>
        <dbReference type="ChEBI" id="CHEBI:30616"/>
        <dbReference type="ChEBI" id="CHEBI:33019"/>
        <dbReference type="ChEBI" id="CHEBI:33384"/>
        <dbReference type="ChEBI" id="CHEBI:78442"/>
        <dbReference type="ChEBI" id="CHEBI:78533"/>
        <dbReference type="ChEBI" id="CHEBI:456215"/>
        <dbReference type="EC" id="6.1.1.11"/>
    </reaction>
</comment>
<comment type="pathway">
    <text evidence="1">Aminoacyl-tRNA biosynthesis; selenocysteinyl-tRNA(Sec) biosynthesis; L-seryl-tRNA(Sec) from L-serine and tRNA(Sec): step 1/1.</text>
</comment>
<comment type="subunit">
    <text evidence="1">Homodimer. The tRNA molecule binds across the dimer.</text>
</comment>
<comment type="subcellular location">
    <subcellularLocation>
        <location evidence="1">Cytoplasm</location>
    </subcellularLocation>
</comment>
<comment type="domain">
    <text evidence="1">Consists of two distinct domains, a catalytic core and a N-terminal extension that is involved in tRNA binding.</text>
</comment>
<comment type="similarity">
    <text evidence="1">Belongs to the class-II aminoacyl-tRNA synthetase family. Type-1 seryl-tRNA synthetase subfamily.</text>
</comment>
<organism>
    <name type="scientific">Citrobacter koseri (strain ATCC BAA-895 / CDC 4225-83 / SGSC4696)</name>
    <dbReference type="NCBI Taxonomy" id="290338"/>
    <lineage>
        <taxon>Bacteria</taxon>
        <taxon>Pseudomonadati</taxon>
        <taxon>Pseudomonadota</taxon>
        <taxon>Gammaproteobacteria</taxon>
        <taxon>Enterobacterales</taxon>
        <taxon>Enterobacteriaceae</taxon>
        <taxon>Citrobacter</taxon>
    </lineage>
</organism>
<dbReference type="EC" id="6.1.1.11" evidence="1"/>
<dbReference type="EMBL" id="CP000822">
    <property type="protein sequence ID" value="ABV13302.1"/>
    <property type="molecule type" value="Genomic_DNA"/>
</dbReference>
<dbReference type="RefSeq" id="WP_012133033.1">
    <property type="nucleotide sequence ID" value="NC_009792.1"/>
</dbReference>
<dbReference type="SMR" id="A8AII9"/>
<dbReference type="STRING" id="290338.CKO_02178"/>
<dbReference type="GeneID" id="45136111"/>
<dbReference type="KEGG" id="cko:CKO_02178"/>
<dbReference type="HOGENOM" id="CLU_023797_1_1_6"/>
<dbReference type="OrthoDB" id="9804647at2"/>
<dbReference type="UniPathway" id="UPA00906">
    <property type="reaction ID" value="UER00895"/>
</dbReference>
<dbReference type="Proteomes" id="UP000008148">
    <property type="component" value="Chromosome"/>
</dbReference>
<dbReference type="GO" id="GO:0005737">
    <property type="term" value="C:cytoplasm"/>
    <property type="evidence" value="ECO:0007669"/>
    <property type="project" value="UniProtKB-SubCell"/>
</dbReference>
<dbReference type="GO" id="GO:0005524">
    <property type="term" value="F:ATP binding"/>
    <property type="evidence" value="ECO:0007669"/>
    <property type="project" value="UniProtKB-UniRule"/>
</dbReference>
<dbReference type="GO" id="GO:0004828">
    <property type="term" value="F:serine-tRNA ligase activity"/>
    <property type="evidence" value="ECO:0007669"/>
    <property type="project" value="UniProtKB-UniRule"/>
</dbReference>
<dbReference type="GO" id="GO:0016260">
    <property type="term" value="P:selenocysteine biosynthetic process"/>
    <property type="evidence" value="ECO:0007669"/>
    <property type="project" value="UniProtKB-UniRule"/>
</dbReference>
<dbReference type="GO" id="GO:0006434">
    <property type="term" value="P:seryl-tRNA aminoacylation"/>
    <property type="evidence" value="ECO:0007669"/>
    <property type="project" value="UniProtKB-UniRule"/>
</dbReference>
<dbReference type="CDD" id="cd00770">
    <property type="entry name" value="SerRS_core"/>
    <property type="match status" value="1"/>
</dbReference>
<dbReference type="FunFam" id="1.10.287.40:FF:000001">
    <property type="entry name" value="Serine--tRNA ligase"/>
    <property type="match status" value="1"/>
</dbReference>
<dbReference type="FunFam" id="3.30.930.10:FF:000018">
    <property type="entry name" value="Serine--tRNA ligase"/>
    <property type="match status" value="1"/>
</dbReference>
<dbReference type="Gene3D" id="3.30.930.10">
    <property type="entry name" value="Bira Bifunctional Protein, Domain 2"/>
    <property type="match status" value="1"/>
</dbReference>
<dbReference type="Gene3D" id="1.10.287.40">
    <property type="entry name" value="Serine-tRNA synthetase, tRNA binding domain"/>
    <property type="match status" value="1"/>
</dbReference>
<dbReference type="HAMAP" id="MF_00176">
    <property type="entry name" value="Ser_tRNA_synth_type1"/>
    <property type="match status" value="1"/>
</dbReference>
<dbReference type="InterPro" id="IPR002314">
    <property type="entry name" value="aa-tRNA-synt_IIb"/>
</dbReference>
<dbReference type="InterPro" id="IPR006195">
    <property type="entry name" value="aa-tRNA-synth_II"/>
</dbReference>
<dbReference type="InterPro" id="IPR045864">
    <property type="entry name" value="aa-tRNA-synth_II/BPL/LPL"/>
</dbReference>
<dbReference type="InterPro" id="IPR002317">
    <property type="entry name" value="Ser-tRNA-ligase_type_1"/>
</dbReference>
<dbReference type="InterPro" id="IPR015866">
    <property type="entry name" value="Ser-tRNA-synth_1_N"/>
</dbReference>
<dbReference type="InterPro" id="IPR042103">
    <property type="entry name" value="SerRS_1_N_sf"/>
</dbReference>
<dbReference type="InterPro" id="IPR033729">
    <property type="entry name" value="SerRS_core"/>
</dbReference>
<dbReference type="InterPro" id="IPR010978">
    <property type="entry name" value="tRNA-bd_arm"/>
</dbReference>
<dbReference type="NCBIfam" id="TIGR00414">
    <property type="entry name" value="serS"/>
    <property type="match status" value="1"/>
</dbReference>
<dbReference type="PANTHER" id="PTHR43697:SF1">
    <property type="entry name" value="SERINE--TRNA LIGASE"/>
    <property type="match status" value="1"/>
</dbReference>
<dbReference type="PANTHER" id="PTHR43697">
    <property type="entry name" value="SERYL-TRNA SYNTHETASE"/>
    <property type="match status" value="1"/>
</dbReference>
<dbReference type="Pfam" id="PF02403">
    <property type="entry name" value="Seryl_tRNA_N"/>
    <property type="match status" value="1"/>
</dbReference>
<dbReference type="Pfam" id="PF00587">
    <property type="entry name" value="tRNA-synt_2b"/>
    <property type="match status" value="1"/>
</dbReference>
<dbReference type="PIRSF" id="PIRSF001529">
    <property type="entry name" value="Ser-tRNA-synth_IIa"/>
    <property type="match status" value="1"/>
</dbReference>
<dbReference type="PRINTS" id="PR00981">
    <property type="entry name" value="TRNASYNTHSER"/>
</dbReference>
<dbReference type="SUPFAM" id="SSF55681">
    <property type="entry name" value="Class II aaRS and biotin synthetases"/>
    <property type="match status" value="1"/>
</dbReference>
<dbReference type="SUPFAM" id="SSF46589">
    <property type="entry name" value="tRNA-binding arm"/>
    <property type="match status" value="1"/>
</dbReference>
<dbReference type="PROSITE" id="PS50862">
    <property type="entry name" value="AA_TRNA_LIGASE_II"/>
    <property type="match status" value="1"/>
</dbReference>
<sequence>MLDPNLLRNEPDAVAEKLARRGFKLDVDKLRALEERRKVLQVNTENLQAERNSRSKSIGQAKARGEDIEPLRLEVNKLGEELDAAKAELESLQAEIRDIALTIPNLPADDVPVGKDENDNVEVSRWGTPREFDFDVRDHVTLGEMHAGLDFAAAVKLTGSRFVVMKGQIARMHRALSQFMLDLHTEQHGYSENYVPYLVNHDTLYGTGQLPKFAGDLFHTRPLEEEADSSNYALIPTAEVPLTNLVRDEIIDEDALPIKMTAHTPCFRSEAGSYGRDTRGLIRMHQFDKVEMVQIVRPEESMDALEEMTGHAEKVLQLLGLPYRKIVLCTGDMGFGACKTYDLEVWIPAQNTYREISSCSNVWDFQARRMQARCRSKSDKKTRLVHTLNGSGLAVGRTLVAVMENYQQADGRIEVPEVLRPYMNGLEYIG</sequence>
<name>SYS_CITK8</name>
<protein>
    <recommendedName>
        <fullName evidence="1">Serine--tRNA ligase</fullName>
        <ecNumber evidence="1">6.1.1.11</ecNumber>
    </recommendedName>
    <alternativeName>
        <fullName evidence="1">Seryl-tRNA synthetase</fullName>
        <shortName evidence="1">SerRS</shortName>
    </alternativeName>
    <alternativeName>
        <fullName evidence="1">Seryl-tRNA(Ser/Sec) synthetase</fullName>
    </alternativeName>
</protein>
<feature type="chain" id="PRO_1000019654" description="Serine--tRNA ligase">
    <location>
        <begin position="1"/>
        <end position="430"/>
    </location>
</feature>
<feature type="binding site" evidence="1">
    <location>
        <begin position="237"/>
        <end position="239"/>
    </location>
    <ligand>
        <name>L-serine</name>
        <dbReference type="ChEBI" id="CHEBI:33384"/>
    </ligand>
</feature>
<feature type="binding site" evidence="1">
    <location>
        <begin position="268"/>
        <end position="270"/>
    </location>
    <ligand>
        <name>ATP</name>
        <dbReference type="ChEBI" id="CHEBI:30616"/>
    </ligand>
</feature>
<feature type="binding site" evidence="1">
    <location>
        <position position="291"/>
    </location>
    <ligand>
        <name>L-serine</name>
        <dbReference type="ChEBI" id="CHEBI:33384"/>
    </ligand>
</feature>
<feature type="binding site" evidence="1">
    <location>
        <begin position="355"/>
        <end position="358"/>
    </location>
    <ligand>
        <name>ATP</name>
        <dbReference type="ChEBI" id="CHEBI:30616"/>
    </ligand>
</feature>
<feature type="binding site" evidence="1">
    <location>
        <position position="391"/>
    </location>
    <ligand>
        <name>L-serine</name>
        <dbReference type="ChEBI" id="CHEBI:33384"/>
    </ligand>
</feature>
<reference key="1">
    <citation type="submission" date="2007-08" db="EMBL/GenBank/DDBJ databases">
        <authorList>
            <consortium name="The Citrobacter koseri Genome Sequencing Project"/>
            <person name="McClelland M."/>
            <person name="Sanderson E.K."/>
            <person name="Porwollik S."/>
            <person name="Spieth J."/>
            <person name="Clifton W.S."/>
            <person name="Latreille P."/>
            <person name="Courtney L."/>
            <person name="Wang C."/>
            <person name="Pepin K."/>
            <person name="Bhonagiri V."/>
            <person name="Nash W."/>
            <person name="Johnson M."/>
            <person name="Thiruvilangam P."/>
            <person name="Wilson R."/>
        </authorList>
    </citation>
    <scope>NUCLEOTIDE SEQUENCE [LARGE SCALE GENOMIC DNA]</scope>
    <source>
        <strain>ATCC BAA-895 / CDC 4225-83 / SGSC4696</strain>
    </source>
</reference>
<evidence type="ECO:0000255" key="1">
    <source>
        <dbReference type="HAMAP-Rule" id="MF_00176"/>
    </source>
</evidence>
<gene>
    <name evidence="1" type="primary">serS</name>
    <name type="ordered locus">CKO_02178</name>
</gene>
<keyword id="KW-0030">Aminoacyl-tRNA synthetase</keyword>
<keyword id="KW-0067">ATP-binding</keyword>
<keyword id="KW-0963">Cytoplasm</keyword>
<keyword id="KW-0436">Ligase</keyword>
<keyword id="KW-0547">Nucleotide-binding</keyword>
<keyword id="KW-0648">Protein biosynthesis</keyword>
<keyword id="KW-1185">Reference proteome</keyword>
<proteinExistence type="inferred from homology"/>